<name>027R_FRG3G</name>
<feature type="chain" id="PRO_0000410503" description="Uncharacterized protein 027R">
    <location>
        <begin position="1"/>
        <end position="970"/>
    </location>
</feature>
<feature type="region of interest" description="Disordered" evidence="1">
    <location>
        <begin position="942"/>
        <end position="970"/>
    </location>
</feature>
<feature type="compositionally biased region" description="Basic and acidic residues" evidence="1">
    <location>
        <begin position="953"/>
        <end position="970"/>
    </location>
</feature>
<gene>
    <name type="ORF">FV3-027R</name>
</gene>
<organism>
    <name type="scientific">Frog virus 3 (isolate Goorha)</name>
    <name type="common">FV-3</name>
    <dbReference type="NCBI Taxonomy" id="654924"/>
    <lineage>
        <taxon>Viruses</taxon>
        <taxon>Varidnaviria</taxon>
        <taxon>Bamfordvirae</taxon>
        <taxon>Nucleocytoviricota</taxon>
        <taxon>Megaviricetes</taxon>
        <taxon>Pimascovirales</taxon>
        <taxon>Iridoviridae</taxon>
        <taxon>Alphairidovirinae</taxon>
        <taxon>Ranavirus</taxon>
        <taxon>Frog virus 3</taxon>
    </lineage>
</organism>
<organismHost>
    <name type="scientific">Dryophytes versicolor</name>
    <name type="common">chameleon treefrog</name>
    <dbReference type="NCBI Taxonomy" id="30343"/>
</organismHost>
<organismHost>
    <name type="scientific">Lithobates pipiens</name>
    <name type="common">Northern leopard frog</name>
    <name type="synonym">Rana pipiens</name>
    <dbReference type="NCBI Taxonomy" id="8404"/>
</organismHost>
<organismHost>
    <name type="scientific">Lithobates sylvaticus</name>
    <name type="common">Wood frog</name>
    <name type="synonym">Rana sylvatica</name>
    <dbReference type="NCBI Taxonomy" id="45438"/>
</organismHost>
<organismHost>
    <name type="scientific">Notophthalmus viridescens</name>
    <name type="common">Eastern newt</name>
    <name type="synonym">Triturus viridescens</name>
    <dbReference type="NCBI Taxonomy" id="8316"/>
</organismHost>
<evidence type="ECO:0000256" key="1">
    <source>
        <dbReference type="SAM" id="MobiDB-lite"/>
    </source>
</evidence>
<dbReference type="EMBL" id="AY548484">
    <property type="protein sequence ID" value="AAT09686.1"/>
    <property type="molecule type" value="Genomic_DNA"/>
</dbReference>
<dbReference type="RefSeq" id="YP_031605.1">
    <property type="nucleotide sequence ID" value="NC_005946.1"/>
</dbReference>
<dbReference type="SMR" id="Q6GZU9"/>
<dbReference type="KEGG" id="vg:2947747"/>
<dbReference type="Proteomes" id="UP000008770">
    <property type="component" value="Segment"/>
</dbReference>
<dbReference type="GO" id="GO:0016301">
    <property type="term" value="F:kinase activity"/>
    <property type="evidence" value="ECO:0007669"/>
    <property type="project" value="UniProtKB-KW"/>
</dbReference>
<dbReference type="InterPro" id="IPR006598">
    <property type="entry name" value="CAP10"/>
</dbReference>
<dbReference type="InterPro" id="IPR051091">
    <property type="entry name" value="O-Glucosyltr/Glycosyltrsf_90"/>
</dbReference>
<dbReference type="PANTHER" id="PTHR12203">
    <property type="entry name" value="KDEL LYS-ASP-GLU-LEU CONTAINING - RELATED"/>
    <property type="match status" value="1"/>
</dbReference>
<dbReference type="PANTHER" id="PTHR12203:SF35">
    <property type="entry name" value="PROTEIN O-GLUCOSYLTRANSFERASE 1"/>
    <property type="match status" value="1"/>
</dbReference>
<dbReference type="Pfam" id="PF05686">
    <property type="entry name" value="Glyco_transf_90"/>
    <property type="match status" value="1"/>
</dbReference>
<dbReference type="SMART" id="SM00672">
    <property type="entry name" value="CAP10"/>
    <property type="match status" value="1"/>
</dbReference>
<reference key="1">
    <citation type="journal article" date="2004" name="Virology">
        <title>Comparative genomic analyses of frog virus 3, type species of the genus Ranavirus (family Iridoviridae).</title>
        <authorList>
            <person name="Tan W.G."/>
            <person name="Barkman T.J."/>
            <person name="Gregory Chinchar V."/>
            <person name="Essani K."/>
        </authorList>
    </citation>
    <scope>NUCLEOTIDE SEQUENCE [LARGE SCALE GENOMIC DNA]</scope>
</reference>
<accession>Q6GZU9</accession>
<keyword id="KW-0418">Kinase</keyword>
<keyword id="KW-1185">Reference proteome</keyword>
<keyword id="KW-0808">Transferase</keyword>
<sequence>MANFLQDVNCETVSEYDGPDASIPEGVWEGYVGHDHAALWRTWSYIYECCKKGTLVQFRGGKLVTFSMFDNPRFSNGAGIDAQKVLDLEDRARELQGYGPVNRRTDVMPVDRWTLNGPLLRYDKMVLEDVGGTGSNRTMVRAQLEALQDERDVPDCDFILNVRDYPLLRRDGTRPYPQVYGKGRRLPEPWARGGPHVPVVSMCSGPTYADIAVPTYECIAHAYTSSGRTLPAGGRFVKTPSADSLPAWRDRKALAVFRGSSTGAGTSTEDNQRLRALQISMSRPDLADVGITKWNLRPRKTERYDGYRIIEPWQFGRKSPYPAAAKPMTPEQIAGYKYVLCLWGHAPAFRLARDLSLGSVVLLPSRPPGQEGLDMWHSSVLKPWTHYIPVRGDLSDLEKRIEWCRDNDAECEKIAAAGMEASLNLLGWEGQLDRWMDVLRSVRLECCPGGYDMPPSPSLVSDSMCVRQMVSFPRYEDIPQPSSPMPVLPRCSGTLRGWGLAASLGWDLGDAAEVLNVKRSTAVLSKTVFNNLIYRTPHLRYTFGVAASDPESTAAVILSEKLKGAVTMRSWLEDSRAWARGRNVASVLCQVSQALLEAQAAAGTVFGDLSLDTILVVPNPLPEYIYHDGTGGSFGLKLMPGDKWAVVTYGDYTRARIRVLKGDGRKGHLAVVGPQPVYTKLSERKWHDICCLVSCILRTARTSKRPAARALAAAVARAAGVKRPDMDAEALEATPYEAREEPLTRFGPAEFINGLVREFKLEEGGWAWTEKNKNIEKVLRPWERGLPLYPVRLWLSGDRKEAMRACVSSVLKAAPPRPATAAGAHHTFQTYLRTVGADLDSFPEWAAAAAHLKRLWKSPGSLPAGSASLRAPSVPPPCHGPAWALPFGTRTPGEFPSWFDPSCLGDWTEAMGQGAPLDLENGPAKAGSDPVAVHSAWETASQLSFEEDGWTESEPRPVRREAHVRAKERH</sequence>
<proteinExistence type="predicted"/>
<protein>
    <recommendedName>
        <fullName>Uncharacterized protein 027R</fullName>
    </recommendedName>
</protein>